<proteinExistence type="evidence at transcript level"/>
<feature type="chain" id="PRO_0000370446" description="Pescadillo homolog">
    <location>
        <begin position="1"/>
        <end position="582"/>
    </location>
</feature>
<feature type="domain" description="BRCT" evidence="1">
    <location>
        <begin position="323"/>
        <end position="416"/>
    </location>
</feature>
<feature type="region of interest" description="Disordered" evidence="2">
    <location>
        <begin position="294"/>
        <end position="317"/>
    </location>
</feature>
<feature type="region of interest" description="Disordered" evidence="2">
    <location>
        <begin position="445"/>
        <end position="511"/>
    </location>
</feature>
<feature type="region of interest" description="Disordered" evidence="2">
    <location>
        <begin position="554"/>
        <end position="582"/>
    </location>
</feature>
<feature type="coiled-coil region" evidence="1">
    <location>
        <begin position="277"/>
        <end position="329"/>
    </location>
</feature>
<feature type="coiled-coil region" evidence="1">
    <location>
        <begin position="517"/>
        <end position="582"/>
    </location>
</feature>
<feature type="compositionally biased region" description="Acidic residues" evidence="2">
    <location>
        <begin position="294"/>
        <end position="309"/>
    </location>
</feature>
<feature type="compositionally biased region" description="Basic and acidic residues" evidence="2">
    <location>
        <begin position="445"/>
        <end position="454"/>
    </location>
</feature>
<feature type="compositionally biased region" description="Acidic residues" evidence="2">
    <location>
        <begin position="455"/>
        <end position="477"/>
    </location>
</feature>
<feature type="compositionally biased region" description="Basic and acidic residues" evidence="2">
    <location>
        <begin position="478"/>
        <end position="490"/>
    </location>
</feature>
<feature type="compositionally biased region" description="Basic residues" evidence="2">
    <location>
        <begin position="572"/>
        <end position="582"/>
    </location>
</feature>
<dbReference type="EMBL" id="BT044790">
    <property type="protein sequence ID" value="ACI33052.1"/>
    <property type="molecule type" value="mRNA"/>
</dbReference>
<dbReference type="RefSeq" id="NP_001133338.1">
    <property type="nucleotide sequence ID" value="NM_001139866.1"/>
</dbReference>
<dbReference type="SMR" id="B5X171"/>
<dbReference type="STRING" id="8030.ENSSSAP00000076846"/>
<dbReference type="PaxDb" id="8030-ENSSSAP00000076846"/>
<dbReference type="GeneID" id="100194837"/>
<dbReference type="KEGG" id="sasa:100194837"/>
<dbReference type="CTD" id="30228"/>
<dbReference type="OrthoDB" id="475123at7898"/>
<dbReference type="Proteomes" id="UP000087266">
    <property type="component" value="Chromosome ssa20"/>
</dbReference>
<dbReference type="GO" id="GO:0005730">
    <property type="term" value="C:nucleolus"/>
    <property type="evidence" value="ECO:0000250"/>
    <property type="project" value="UniProtKB"/>
</dbReference>
<dbReference type="GO" id="GO:0005654">
    <property type="term" value="C:nucleoplasm"/>
    <property type="evidence" value="ECO:0000250"/>
    <property type="project" value="UniProtKB"/>
</dbReference>
<dbReference type="GO" id="GO:0070545">
    <property type="term" value="C:PeBoW complex"/>
    <property type="evidence" value="ECO:0000250"/>
    <property type="project" value="UniProtKB"/>
</dbReference>
<dbReference type="GO" id="GO:0030687">
    <property type="term" value="C:preribosome, large subunit precursor"/>
    <property type="evidence" value="ECO:0000250"/>
    <property type="project" value="UniProtKB"/>
</dbReference>
<dbReference type="GO" id="GO:0043021">
    <property type="term" value="F:ribonucleoprotein complex binding"/>
    <property type="evidence" value="ECO:0007669"/>
    <property type="project" value="UniProtKB-UniRule"/>
</dbReference>
<dbReference type="GO" id="GO:0003723">
    <property type="term" value="F:RNA binding"/>
    <property type="evidence" value="ECO:0007669"/>
    <property type="project" value="TreeGrafter"/>
</dbReference>
<dbReference type="GO" id="GO:0000466">
    <property type="term" value="P:maturation of 5.8S rRNA from tricistronic rRNA transcript (SSU-rRNA, 5.8S rRNA, LSU-rRNA)"/>
    <property type="evidence" value="ECO:0000250"/>
    <property type="project" value="UniProtKB"/>
</dbReference>
<dbReference type="GO" id="GO:0000463">
    <property type="term" value="P:maturation of LSU-rRNA from tricistronic rRNA transcript (SSU-rRNA, 5.8S rRNA, LSU-rRNA)"/>
    <property type="evidence" value="ECO:0000250"/>
    <property type="project" value="UniProtKB"/>
</dbReference>
<dbReference type="GO" id="GO:0051726">
    <property type="term" value="P:regulation of cell cycle"/>
    <property type="evidence" value="ECO:0000250"/>
    <property type="project" value="UniProtKB"/>
</dbReference>
<dbReference type="CDD" id="cd17709">
    <property type="entry name" value="BRCT_pescadillo_like"/>
    <property type="match status" value="1"/>
</dbReference>
<dbReference type="FunFam" id="3.40.50.10190:FF:000002">
    <property type="entry name" value="Pescadillo homolog"/>
    <property type="match status" value="1"/>
</dbReference>
<dbReference type="Gene3D" id="3.40.50.10190">
    <property type="entry name" value="BRCT domain"/>
    <property type="match status" value="1"/>
</dbReference>
<dbReference type="HAMAP" id="MF_03028">
    <property type="entry name" value="Pescadillo"/>
    <property type="match status" value="1"/>
</dbReference>
<dbReference type="InterPro" id="IPR001357">
    <property type="entry name" value="BRCT_dom"/>
</dbReference>
<dbReference type="InterPro" id="IPR036420">
    <property type="entry name" value="BRCT_dom_sf"/>
</dbReference>
<dbReference type="InterPro" id="IPR010613">
    <property type="entry name" value="PES"/>
</dbReference>
<dbReference type="PANTHER" id="PTHR12221">
    <property type="entry name" value="PESCADILLO - RELATED"/>
    <property type="match status" value="1"/>
</dbReference>
<dbReference type="PANTHER" id="PTHR12221:SF6">
    <property type="entry name" value="PESCADILLO HOMOLOG"/>
    <property type="match status" value="1"/>
</dbReference>
<dbReference type="Pfam" id="PF06732">
    <property type="entry name" value="Pescadillo_N"/>
    <property type="match status" value="1"/>
</dbReference>
<dbReference type="SMART" id="SM00292">
    <property type="entry name" value="BRCT"/>
    <property type="match status" value="1"/>
</dbReference>
<dbReference type="SUPFAM" id="SSF52113">
    <property type="entry name" value="BRCT domain"/>
    <property type="match status" value="1"/>
</dbReference>
<dbReference type="PROSITE" id="PS50172">
    <property type="entry name" value="BRCT"/>
    <property type="match status" value="1"/>
</dbReference>
<protein>
    <recommendedName>
        <fullName evidence="1">Pescadillo homolog</fullName>
    </recommendedName>
</protein>
<organism>
    <name type="scientific">Salmo salar</name>
    <name type="common">Atlantic salmon</name>
    <dbReference type="NCBI Taxonomy" id="8030"/>
    <lineage>
        <taxon>Eukaryota</taxon>
        <taxon>Metazoa</taxon>
        <taxon>Chordata</taxon>
        <taxon>Craniata</taxon>
        <taxon>Vertebrata</taxon>
        <taxon>Euteleostomi</taxon>
        <taxon>Actinopterygii</taxon>
        <taxon>Neopterygii</taxon>
        <taxon>Teleostei</taxon>
        <taxon>Protacanthopterygii</taxon>
        <taxon>Salmoniformes</taxon>
        <taxon>Salmonidae</taxon>
        <taxon>Salmoninae</taxon>
        <taxon>Salmo</taxon>
    </lineage>
</organism>
<sequence length="582" mass="68478">MGGLQKKKYERGSATNYITRNKARKKLQLSLADFRRLCILKGIYPHEPKHKKKVNKGSTAPRTFYLLKDIRFLLHEPIVRKFREYKVFVRKLRKAYGKAEWTGVERLRDNKPGYKLDHIIKERYPTFIDALRDIDDALSMCFLFSTFARTGKCHVQTITLCRRLTVEWMNYVVTSRSLRKVFLSIKGIYYQAEVLGQLITWLVPYQFAHDHPTDVDYRVMATFTEMYTTLFGFINFRLYQTLNLVYPPKLDSKAESELKAEHEEDYAMDSESYLEKLSALSASLARVVATVEEEENQLDNFPTEEEDQENMQAREKEQKEQEAQKRLFEGLKFFLNREVPRESLAFILRCFGAEVSWDKSLCIGGTYEVTDETITHQIVDRPDMDKQYINRYYIQPQWVFDSVNAKMRLPVEDYFLGTMLPPHLSPFVEEKDGDYVPPEKLKLMALQRGEKPVQEEDEEEEDEDEEEDDDVDDEEFTEEKNLKKMEDTRAQGKTLSVKVTPGKVKPWETGSVGNKVRLEQEEKAEEKRLAIMMMKKKEKYLYDKIMFGKKRTTREVNKLTAKRKAHEDASKAQKKQKKAKKQ</sequence>
<accession>B5X171</accession>
<name>PESC_SALSA</name>
<evidence type="ECO:0000255" key="1">
    <source>
        <dbReference type="HAMAP-Rule" id="MF_03028"/>
    </source>
</evidence>
<evidence type="ECO:0000256" key="2">
    <source>
        <dbReference type="SAM" id="MobiDB-lite"/>
    </source>
</evidence>
<reference key="1">
    <citation type="journal article" date="2010" name="BMC Genomics">
        <title>Salmo salar and Esox lucius full-length cDNA sequences reveal changes in evolutionary pressures on a post-tetraploidization genome.</title>
        <authorList>
            <person name="Leong J.S."/>
            <person name="Jantzen S.G."/>
            <person name="von Schalburg K.R."/>
            <person name="Cooper G.A."/>
            <person name="Messmer A.M."/>
            <person name="Liao N.Y."/>
            <person name="Munro S."/>
            <person name="Moore R."/>
            <person name="Holt R.A."/>
            <person name="Jones S.J."/>
            <person name="Davidson W.S."/>
            <person name="Koop B.F."/>
        </authorList>
    </citation>
    <scope>NUCLEOTIDE SEQUENCE [LARGE SCALE MRNA]</scope>
    <source>
        <tissue>Brain</tissue>
    </source>
</reference>
<comment type="function">
    <text evidence="1">Component of the PeBoW complex, which is required for maturation of 28S and 5.8S ribosomal RNAs and formation of the 60S ribosome.</text>
</comment>
<comment type="subunit">
    <text evidence="1">Component of the PeBoW complex, composed of bop1, pes1 and wdr12. The complex is held together by bop1, which interacts with pes1 via its N-terminal domain and with wdr12 via a high-affinity interaction between the seven-bladed beta-propeller domains of the 2 proteins. The PeBoW complex associates with the 66S pre-ribosome.</text>
</comment>
<comment type="subcellular location">
    <subcellularLocation>
        <location evidence="1">Nucleus</location>
        <location evidence="1">Nucleolus</location>
    </subcellularLocation>
    <subcellularLocation>
        <location evidence="1">Nucleus</location>
        <location evidence="1">Nucleoplasm</location>
    </subcellularLocation>
</comment>
<comment type="similarity">
    <text evidence="1">Belongs to the pescadillo family.</text>
</comment>
<keyword id="KW-0175">Coiled coil</keyword>
<keyword id="KW-0539">Nucleus</keyword>
<keyword id="KW-1185">Reference proteome</keyword>
<keyword id="KW-0690">Ribosome biogenesis</keyword>
<keyword id="KW-0698">rRNA processing</keyword>
<gene>
    <name type="primary">pes1</name>
</gene>